<protein>
    <recommendedName>
        <fullName evidence="1">NADH-quinone oxidoreductase subunit D</fullName>
        <ecNumber evidence="1">7.1.1.-</ecNumber>
    </recommendedName>
    <alternativeName>
        <fullName evidence="1">NADH dehydrogenase I subunit D</fullName>
    </alternativeName>
    <alternativeName>
        <fullName evidence="1">NDH-1 subunit D</fullName>
    </alternativeName>
</protein>
<comment type="function">
    <text evidence="1">NDH-1 shuttles electrons from NADH, via FMN and iron-sulfur (Fe-S) centers, to quinones in the respiratory chain. The immediate electron acceptor for the enzyme in this species is believed to be ubiquinone. Couples the redox reaction to proton translocation (for every two electrons transferred, four hydrogen ions are translocated across the cytoplasmic membrane), and thus conserves the redox energy in a proton gradient.</text>
</comment>
<comment type="catalytic activity">
    <reaction evidence="1">
        <text>a quinone + NADH + 5 H(+)(in) = a quinol + NAD(+) + 4 H(+)(out)</text>
        <dbReference type="Rhea" id="RHEA:57888"/>
        <dbReference type="ChEBI" id="CHEBI:15378"/>
        <dbReference type="ChEBI" id="CHEBI:24646"/>
        <dbReference type="ChEBI" id="CHEBI:57540"/>
        <dbReference type="ChEBI" id="CHEBI:57945"/>
        <dbReference type="ChEBI" id="CHEBI:132124"/>
    </reaction>
</comment>
<comment type="subunit">
    <text evidence="1">NDH-1 is composed of 14 different subunits. Subunits NuoB, C, D, E, F, and G constitute the peripheral sector of the complex.</text>
</comment>
<comment type="subcellular location">
    <subcellularLocation>
        <location evidence="1">Cell inner membrane</location>
        <topology evidence="1">Peripheral membrane protein</topology>
        <orientation evidence="1">Cytoplasmic side</orientation>
    </subcellularLocation>
</comment>
<comment type="similarity">
    <text evidence="1">Belongs to the complex I 49 kDa subunit family.</text>
</comment>
<reference key="1">
    <citation type="submission" date="2007-02" db="EMBL/GenBank/DDBJ databases">
        <title>Complete sequence of chromosome 1 of Rhodobacter sphaeroides ATCC 17029.</title>
        <authorList>
            <person name="Copeland A."/>
            <person name="Lucas S."/>
            <person name="Lapidus A."/>
            <person name="Barry K."/>
            <person name="Detter J.C."/>
            <person name="Glavina del Rio T."/>
            <person name="Hammon N."/>
            <person name="Israni S."/>
            <person name="Dalin E."/>
            <person name="Tice H."/>
            <person name="Pitluck S."/>
            <person name="Kiss H."/>
            <person name="Brettin T."/>
            <person name="Bruce D."/>
            <person name="Han C."/>
            <person name="Tapia R."/>
            <person name="Gilna P."/>
            <person name="Schmutz J."/>
            <person name="Larimer F."/>
            <person name="Land M."/>
            <person name="Hauser L."/>
            <person name="Kyrpides N."/>
            <person name="Mikhailova N."/>
            <person name="Richardson P."/>
            <person name="Mackenzie C."/>
            <person name="Choudhary M."/>
            <person name="Donohue T.J."/>
            <person name="Kaplan S."/>
        </authorList>
    </citation>
    <scope>NUCLEOTIDE SEQUENCE [LARGE SCALE GENOMIC DNA]</scope>
    <source>
        <strain>ATCC 17029 / ATH 2.4.9</strain>
    </source>
</reference>
<accession>A3PIX1</accession>
<evidence type="ECO:0000255" key="1">
    <source>
        <dbReference type="HAMAP-Rule" id="MF_01358"/>
    </source>
</evidence>
<proteinExistence type="inferred from homology"/>
<name>NUOD_CERS1</name>
<feature type="chain" id="PRO_0000357900" description="NADH-quinone oxidoreductase subunit D">
    <location>
        <begin position="1"/>
        <end position="402"/>
    </location>
</feature>
<gene>
    <name evidence="1" type="primary">nuoD</name>
    <name type="ordered locus">Rsph17029_1177</name>
</gene>
<sequence length="402" mass="45854">MDTKFDDVLTGEQKLRNFNINFGPQHPAAHGVLRLVLELDGEVVERCDPHIGLLHRGTEKLMESRTYLQNLPYFDRLDYVAPMNQEHAWCLAIERLTGVAVPRRASLIRVLYSEIGRVLNHLLNVTTQAMDVGALTPPLWGFEEREKLMVFYERASGARLHAAYFRPGGVHQDLTPRLIEDIEEWAEHFPKVLDDLDELLTENRIFKQRNVDIGIISEKDILDWGFSGVMVRGSGFAWDLRRSQPYECYDEFDFQIPVGKNGDCYDRYLCRMEEMRQSTRIIQQCLAKLRVEKGDVLARGKLTPPPRGEMKTSMEALIHHFKLYTEGFHVPAGEVYAAVEAPKGEFGVYLVADGTNRPYRAKIRAPGFLHLQAIDYIAKGHLLADVSAIIGTLDVVFGEIDR</sequence>
<keyword id="KW-0997">Cell inner membrane</keyword>
<keyword id="KW-1003">Cell membrane</keyword>
<keyword id="KW-0472">Membrane</keyword>
<keyword id="KW-0520">NAD</keyword>
<keyword id="KW-0874">Quinone</keyword>
<keyword id="KW-1278">Translocase</keyword>
<keyword id="KW-0813">Transport</keyword>
<keyword id="KW-0830">Ubiquinone</keyword>
<dbReference type="EC" id="7.1.1.-" evidence="1"/>
<dbReference type="EMBL" id="CP000577">
    <property type="protein sequence ID" value="ABN76287.1"/>
    <property type="molecule type" value="Genomic_DNA"/>
</dbReference>
<dbReference type="SMR" id="A3PIX1"/>
<dbReference type="KEGG" id="rsh:Rsph17029_1177"/>
<dbReference type="HOGENOM" id="CLU_015134_1_1_5"/>
<dbReference type="GO" id="GO:0005886">
    <property type="term" value="C:plasma membrane"/>
    <property type="evidence" value="ECO:0007669"/>
    <property type="project" value="UniProtKB-SubCell"/>
</dbReference>
<dbReference type="GO" id="GO:0051287">
    <property type="term" value="F:NAD binding"/>
    <property type="evidence" value="ECO:0007669"/>
    <property type="project" value="InterPro"/>
</dbReference>
<dbReference type="GO" id="GO:0050136">
    <property type="term" value="F:NADH:ubiquinone reductase (non-electrogenic) activity"/>
    <property type="evidence" value="ECO:0007669"/>
    <property type="project" value="UniProtKB-UniRule"/>
</dbReference>
<dbReference type="GO" id="GO:0048038">
    <property type="term" value="F:quinone binding"/>
    <property type="evidence" value="ECO:0007669"/>
    <property type="project" value="UniProtKB-KW"/>
</dbReference>
<dbReference type="FunFam" id="1.10.645.10:FF:000005">
    <property type="entry name" value="NADH-quinone oxidoreductase subunit D"/>
    <property type="match status" value="1"/>
</dbReference>
<dbReference type="Gene3D" id="1.10.645.10">
    <property type="entry name" value="Cytochrome-c3 Hydrogenase, chain B"/>
    <property type="match status" value="1"/>
</dbReference>
<dbReference type="HAMAP" id="MF_01358">
    <property type="entry name" value="NDH1_NuoD"/>
    <property type="match status" value="1"/>
</dbReference>
<dbReference type="InterPro" id="IPR001135">
    <property type="entry name" value="NADH_Q_OxRdtase_suD"/>
</dbReference>
<dbReference type="InterPro" id="IPR014029">
    <property type="entry name" value="NADH_UbQ_OxRdtase_49kDa_CS"/>
</dbReference>
<dbReference type="InterPro" id="IPR022885">
    <property type="entry name" value="NDH1_su_D/H"/>
</dbReference>
<dbReference type="InterPro" id="IPR029014">
    <property type="entry name" value="NiFe-Hase_large"/>
</dbReference>
<dbReference type="NCBIfam" id="TIGR01962">
    <property type="entry name" value="NuoD"/>
    <property type="match status" value="1"/>
</dbReference>
<dbReference type="NCBIfam" id="NF004739">
    <property type="entry name" value="PRK06075.1"/>
    <property type="match status" value="1"/>
</dbReference>
<dbReference type="PANTHER" id="PTHR11993:SF10">
    <property type="entry name" value="NADH DEHYDROGENASE [UBIQUINONE] IRON-SULFUR PROTEIN 2, MITOCHONDRIAL"/>
    <property type="match status" value="1"/>
</dbReference>
<dbReference type="PANTHER" id="PTHR11993">
    <property type="entry name" value="NADH-UBIQUINONE OXIDOREDUCTASE 49 KDA SUBUNIT"/>
    <property type="match status" value="1"/>
</dbReference>
<dbReference type="Pfam" id="PF00346">
    <property type="entry name" value="Complex1_49kDa"/>
    <property type="match status" value="1"/>
</dbReference>
<dbReference type="SUPFAM" id="SSF56762">
    <property type="entry name" value="HydB/Nqo4-like"/>
    <property type="match status" value="1"/>
</dbReference>
<dbReference type="PROSITE" id="PS00535">
    <property type="entry name" value="COMPLEX1_49K"/>
    <property type="match status" value="1"/>
</dbReference>
<organism>
    <name type="scientific">Cereibacter sphaeroides (strain ATCC 17029 / ATH 2.4.9)</name>
    <name type="common">Rhodobacter sphaeroides</name>
    <dbReference type="NCBI Taxonomy" id="349101"/>
    <lineage>
        <taxon>Bacteria</taxon>
        <taxon>Pseudomonadati</taxon>
        <taxon>Pseudomonadota</taxon>
        <taxon>Alphaproteobacteria</taxon>
        <taxon>Rhodobacterales</taxon>
        <taxon>Paracoccaceae</taxon>
        <taxon>Cereibacter</taxon>
    </lineage>
</organism>